<keyword id="KW-1267">Proteomics identification</keyword>
<keyword id="KW-1185">Reference proteome</keyword>
<evidence type="ECO:0000256" key="1">
    <source>
        <dbReference type="SAM" id="MobiDB-lite"/>
    </source>
</evidence>
<evidence type="ECO:0000305" key="2"/>
<name>XAGE3_HUMAN</name>
<dbReference type="EMBL" id="AJ318881">
    <property type="protein sequence ID" value="CAC83008.1"/>
    <property type="molecule type" value="mRNA"/>
</dbReference>
<dbReference type="EMBL" id="AJ318893">
    <property type="protein sequence ID" value="CAC83014.1"/>
    <property type="molecule type" value="Genomic_DNA"/>
</dbReference>
<dbReference type="EMBL" id="AF318372">
    <property type="protein sequence ID" value="AAL55879.1"/>
    <property type="molecule type" value="mRNA"/>
</dbReference>
<dbReference type="EMBL" id="AL445236">
    <property type="protein sequence ID" value="CAI41615.1"/>
    <property type="molecule type" value="Genomic_DNA"/>
</dbReference>
<dbReference type="EMBL" id="BC062680">
    <property type="protein sequence ID" value="AAH62680.1"/>
    <property type="molecule type" value="mRNA"/>
</dbReference>
<dbReference type="CCDS" id="CCDS14347.1"/>
<dbReference type="RefSeq" id="NP_570132.1">
    <property type="nucleotide sequence ID" value="NM_130776.2"/>
</dbReference>
<dbReference type="RefSeq" id="NP_573440.1">
    <property type="nucleotide sequence ID" value="NM_133179.3"/>
</dbReference>
<dbReference type="RefSeq" id="XP_011529070.1">
    <property type="nucleotide sequence ID" value="XM_011530768.3"/>
</dbReference>
<dbReference type="RefSeq" id="XP_011529071.1">
    <property type="nucleotide sequence ID" value="XM_011530769.3"/>
</dbReference>
<dbReference type="RefSeq" id="XP_011529072.1">
    <property type="nucleotide sequence ID" value="XM_011530770.2"/>
</dbReference>
<dbReference type="RefSeq" id="XP_054182572.1">
    <property type="nucleotide sequence ID" value="XM_054326597.1"/>
</dbReference>
<dbReference type="RefSeq" id="XP_054182573.1">
    <property type="nucleotide sequence ID" value="XM_054326598.1"/>
</dbReference>
<dbReference type="RefSeq" id="XP_054182574.1">
    <property type="nucleotide sequence ID" value="XM_054326599.1"/>
</dbReference>
<dbReference type="BioGRID" id="128072">
    <property type="interactions" value="21"/>
</dbReference>
<dbReference type="FunCoup" id="Q8WTP9">
    <property type="interactions" value="70"/>
</dbReference>
<dbReference type="IntAct" id="Q8WTP9">
    <property type="interactions" value="22"/>
</dbReference>
<dbReference type="MINT" id="Q8WTP9"/>
<dbReference type="STRING" id="9606.ENSP00000303061"/>
<dbReference type="iPTMnet" id="Q8WTP9"/>
<dbReference type="PhosphoSitePlus" id="Q8WTP9"/>
<dbReference type="BioMuta" id="XAGE3"/>
<dbReference type="DMDM" id="27805666"/>
<dbReference type="MassIVE" id="Q8WTP9"/>
<dbReference type="PaxDb" id="9606-ENSP00000303061"/>
<dbReference type="PeptideAtlas" id="Q8WTP9"/>
<dbReference type="Antibodypedia" id="71027">
    <property type="antibodies" value="4 antibodies from 4 providers"/>
</dbReference>
<dbReference type="DNASU" id="170626"/>
<dbReference type="Ensembl" id="ENST00000346279.4">
    <property type="protein sequence ID" value="ENSP00000303061.3"/>
    <property type="gene ID" value="ENSG00000171402.15"/>
</dbReference>
<dbReference type="Ensembl" id="ENST00000375491.7">
    <property type="protein sequence ID" value="ENSP00000364640.3"/>
    <property type="gene ID" value="ENSG00000171402.15"/>
</dbReference>
<dbReference type="GeneID" id="170626"/>
<dbReference type="KEGG" id="hsa:170626"/>
<dbReference type="MANE-Select" id="ENST00000346279.4">
    <property type="protein sequence ID" value="ENSP00000303061.3"/>
    <property type="RefSeq nucleotide sequence ID" value="NM_133179.3"/>
    <property type="RefSeq protein sequence ID" value="NP_573440.1"/>
</dbReference>
<dbReference type="UCSC" id="uc004dre.4">
    <property type="organism name" value="human"/>
</dbReference>
<dbReference type="AGR" id="HGNC:14618"/>
<dbReference type="CTD" id="170626"/>
<dbReference type="DisGeNET" id="170626"/>
<dbReference type="GeneCards" id="XAGE3"/>
<dbReference type="HGNC" id="HGNC:14618">
    <property type="gene designation" value="XAGE3"/>
</dbReference>
<dbReference type="HPA" id="ENSG00000171402">
    <property type="expression patterns" value="Tissue enriched (placenta)"/>
</dbReference>
<dbReference type="MIM" id="300740">
    <property type="type" value="gene"/>
</dbReference>
<dbReference type="neXtProt" id="NX_Q8WTP9"/>
<dbReference type="OpenTargets" id="ENSG00000171402"/>
<dbReference type="PharmGKB" id="PA33376"/>
<dbReference type="VEuPathDB" id="HostDB:ENSG00000171402"/>
<dbReference type="eggNOG" id="ENOG502TF3A">
    <property type="taxonomic scope" value="Eukaryota"/>
</dbReference>
<dbReference type="GeneTree" id="ENSGT00940000153097"/>
<dbReference type="HOGENOM" id="CLU_150116_2_1_1"/>
<dbReference type="InParanoid" id="Q8WTP9"/>
<dbReference type="OMA" id="PIEMPEI"/>
<dbReference type="OrthoDB" id="9538520at2759"/>
<dbReference type="PAN-GO" id="Q8WTP9">
    <property type="GO annotations" value="0 GO annotations based on evolutionary models"/>
</dbReference>
<dbReference type="PhylomeDB" id="Q8WTP9"/>
<dbReference type="TreeFam" id="TF340669"/>
<dbReference type="PathwayCommons" id="Q8WTP9"/>
<dbReference type="SignaLink" id="Q8WTP9"/>
<dbReference type="BioGRID-ORCS" id="170626">
    <property type="hits" value="105 hits in 721 CRISPR screens"/>
</dbReference>
<dbReference type="GenomeRNAi" id="170626"/>
<dbReference type="Pharos" id="Q8WTP9">
    <property type="development level" value="Tdark"/>
</dbReference>
<dbReference type="PRO" id="PR:Q8WTP9"/>
<dbReference type="Proteomes" id="UP000005640">
    <property type="component" value="Chromosome X"/>
</dbReference>
<dbReference type="RNAct" id="Q8WTP9">
    <property type="molecule type" value="protein"/>
</dbReference>
<dbReference type="Bgee" id="ENSG00000171402">
    <property type="expression patterns" value="Expressed in placenta and 50 other cell types or tissues"/>
</dbReference>
<dbReference type="InterPro" id="IPR031320">
    <property type="entry name" value="GAGE"/>
</dbReference>
<dbReference type="InterPro" id="IPR008625">
    <property type="entry name" value="GAGE_fam"/>
</dbReference>
<dbReference type="PANTHER" id="PTHR14047">
    <property type="entry name" value="P ANTIGEN FAMILY MEMBER 5-RELATED"/>
    <property type="match status" value="1"/>
</dbReference>
<dbReference type="PANTHER" id="PTHR14047:SF4">
    <property type="entry name" value="X ANTIGEN FAMILY MEMBER 3"/>
    <property type="match status" value="1"/>
</dbReference>
<dbReference type="Pfam" id="PF05831">
    <property type="entry name" value="GAGE"/>
    <property type="match status" value="1"/>
</dbReference>
<dbReference type="SMART" id="SM01379">
    <property type="entry name" value="GAGE"/>
    <property type="match status" value="1"/>
</dbReference>
<accession>Q8WTP9</accession>
<accession>Q5JS82</accession>
<accession>Q8WYS9</accession>
<reference key="1">
    <citation type="journal article" date="2002" name="Int. J. Cancer">
        <title>The XAGE family of cancer/testis-associated genes: alignment and expression profile in normal tissues, melanoma lesions and Ewing's sarcoma.</title>
        <authorList>
            <person name="Zendman A.J.W."/>
            <person name="van Kraats A.A."/>
            <person name="Weidle U.H."/>
            <person name="Ruiter D.J."/>
            <person name="van Muijen G.N.P."/>
        </authorList>
    </citation>
    <scope>NUCLEOTIDE SEQUENCE [GENOMIC DNA]</scope>
</reference>
<reference key="2">
    <citation type="journal article" date="2004" name="Proc. Natl. Acad. Sci. U.S.A.">
        <title>Large-scale cDNA transfection screening for genes related to cancer development and progression.</title>
        <authorList>
            <person name="Wan D."/>
            <person name="Gong Y."/>
            <person name="Qin W."/>
            <person name="Zhang P."/>
            <person name="Li J."/>
            <person name="Wei L."/>
            <person name="Zhou X."/>
            <person name="Li H."/>
            <person name="Qiu X."/>
            <person name="Zhong F."/>
            <person name="He L."/>
            <person name="Yu J."/>
            <person name="Yao G."/>
            <person name="Jiang H."/>
            <person name="Qian L."/>
            <person name="Yu Y."/>
            <person name="Shu H."/>
            <person name="Chen X."/>
            <person name="Xu H."/>
            <person name="Guo M."/>
            <person name="Pan Z."/>
            <person name="Chen Y."/>
            <person name="Ge C."/>
            <person name="Yang S."/>
            <person name="Gu J."/>
        </authorList>
    </citation>
    <scope>NUCLEOTIDE SEQUENCE [LARGE SCALE MRNA]</scope>
</reference>
<reference key="3">
    <citation type="journal article" date="2005" name="Nature">
        <title>The DNA sequence of the human X chromosome.</title>
        <authorList>
            <person name="Ross M.T."/>
            <person name="Grafham D.V."/>
            <person name="Coffey A.J."/>
            <person name="Scherer S."/>
            <person name="McLay K."/>
            <person name="Muzny D."/>
            <person name="Platzer M."/>
            <person name="Howell G.R."/>
            <person name="Burrows C."/>
            <person name="Bird C.P."/>
            <person name="Frankish A."/>
            <person name="Lovell F.L."/>
            <person name="Howe K.L."/>
            <person name="Ashurst J.L."/>
            <person name="Fulton R.S."/>
            <person name="Sudbrak R."/>
            <person name="Wen G."/>
            <person name="Jones M.C."/>
            <person name="Hurles M.E."/>
            <person name="Andrews T.D."/>
            <person name="Scott C.E."/>
            <person name="Searle S."/>
            <person name="Ramser J."/>
            <person name="Whittaker A."/>
            <person name="Deadman R."/>
            <person name="Carter N.P."/>
            <person name="Hunt S.E."/>
            <person name="Chen R."/>
            <person name="Cree A."/>
            <person name="Gunaratne P."/>
            <person name="Havlak P."/>
            <person name="Hodgson A."/>
            <person name="Metzker M.L."/>
            <person name="Richards S."/>
            <person name="Scott G."/>
            <person name="Steffen D."/>
            <person name="Sodergren E."/>
            <person name="Wheeler D.A."/>
            <person name="Worley K.C."/>
            <person name="Ainscough R."/>
            <person name="Ambrose K.D."/>
            <person name="Ansari-Lari M.A."/>
            <person name="Aradhya S."/>
            <person name="Ashwell R.I."/>
            <person name="Babbage A.K."/>
            <person name="Bagguley C.L."/>
            <person name="Ballabio A."/>
            <person name="Banerjee R."/>
            <person name="Barker G.E."/>
            <person name="Barlow K.F."/>
            <person name="Barrett I.P."/>
            <person name="Bates K.N."/>
            <person name="Beare D.M."/>
            <person name="Beasley H."/>
            <person name="Beasley O."/>
            <person name="Beck A."/>
            <person name="Bethel G."/>
            <person name="Blechschmidt K."/>
            <person name="Brady N."/>
            <person name="Bray-Allen S."/>
            <person name="Bridgeman A.M."/>
            <person name="Brown A.J."/>
            <person name="Brown M.J."/>
            <person name="Bonnin D."/>
            <person name="Bruford E.A."/>
            <person name="Buhay C."/>
            <person name="Burch P."/>
            <person name="Burford D."/>
            <person name="Burgess J."/>
            <person name="Burrill W."/>
            <person name="Burton J."/>
            <person name="Bye J.M."/>
            <person name="Carder C."/>
            <person name="Carrel L."/>
            <person name="Chako J."/>
            <person name="Chapman J.C."/>
            <person name="Chavez D."/>
            <person name="Chen E."/>
            <person name="Chen G."/>
            <person name="Chen Y."/>
            <person name="Chen Z."/>
            <person name="Chinault C."/>
            <person name="Ciccodicola A."/>
            <person name="Clark S.Y."/>
            <person name="Clarke G."/>
            <person name="Clee C.M."/>
            <person name="Clegg S."/>
            <person name="Clerc-Blankenburg K."/>
            <person name="Clifford K."/>
            <person name="Cobley V."/>
            <person name="Cole C.G."/>
            <person name="Conquer J.S."/>
            <person name="Corby N."/>
            <person name="Connor R.E."/>
            <person name="David R."/>
            <person name="Davies J."/>
            <person name="Davis C."/>
            <person name="Davis J."/>
            <person name="Delgado O."/>
            <person name="Deshazo D."/>
            <person name="Dhami P."/>
            <person name="Ding Y."/>
            <person name="Dinh H."/>
            <person name="Dodsworth S."/>
            <person name="Draper H."/>
            <person name="Dugan-Rocha S."/>
            <person name="Dunham A."/>
            <person name="Dunn M."/>
            <person name="Durbin K.J."/>
            <person name="Dutta I."/>
            <person name="Eades T."/>
            <person name="Ellwood M."/>
            <person name="Emery-Cohen A."/>
            <person name="Errington H."/>
            <person name="Evans K.L."/>
            <person name="Faulkner L."/>
            <person name="Francis F."/>
            <person name="Frankland J."/>
            <person name="Fraser A.E."/>
            <person name="Galgoczy P."/>
            <person name="Gilbert J."/>
            <person name="Gill R."/>
            <person name="Gloeckner G."/>
            <person name="Gregory S.G."/>
            <person name="Gribble S."/>
            <person name="Griffiths C."/>
            <person name="Grocock R."/>
            <person name="Gu Y."/>
            <person name="Gwilliam R."/>
            <person name="Hamilton C."/>
            <person name="Hart E.A."/>
            <person name="Hawes A."/>
            <person name="Heath P.D."/>
            <person name="Heitmann K."/>
            <person name="Hennig S."/>
            <person name="Hernandez J."/>
            <person name="Hinzmann B."/>
            <person name="Ho S."/>
            <person name="Hoffs M."/>
            <person name="Howden P.J."/>
            <person name="Huckle E.J."/>
            <person name="Hume J."/>
            <person name="Hunt P.J."/>
            <person name="Hunt A.R."/>
            <person name="Isherwood J."/>
            <person name="Jacob L."/>
            <person name="Johnson D."/>
            <person name="Jones S."/>
            <person name="de Jong P.J."/>
            <person name="Joseph S.S."/>
            <person name="Keenan S."/>
            <person name="Kelly S."/>
            <person name="Kershaw J.K."/>
            <person name="Khan Z."/>
            <person name="Kioschis P."/>
            <person name="Klages S."/>
            <person name="Knights A.J."/>
            <person name="Kosiura A."/>
            <person name="Kovar-Smith C."/>
            <person name="Laird G.K."/>
            <person name="Langford C."/>
            <person name="Lawlor S."/>
            <person name="Leversha M."/>
            <person name="Lewis L."/>
            <person name="Liu W."/>
            <person name="Lloyd C."/>
            <person name="Lloyd D.M."/>
            <person name="Loulseged H."/>
            <person name="Loveland J.E."/>
            <person name="Lovell J.D."/>
            <person name="Lozado R."/>
            <person name="Lu J."/>
            <person name="Lyne R."/>
            <person name="Ma J."/>
            <person name="Maheshwari M."/>
            <person name="Matthews L.H."/>
            <person name="McDowall J."/>
            <person name="McLaren S."/>
            <person name="McMurray A."/>
            <person name="Meidl P."/>
            <person name="Meitinger T."/>
            <person name="Milne S."/>
            <person name="Miner G."/>
            <person name="Mistry S.L."/>
            <person name="Morgan M."/>
            <person name="Morris S."/>
            <person name="Mueller I."/>
            <person name="Mullikin J.C."/>
            <person name="Nguyen N."/>
            <person name="Nordsiek G."/>
            <person name="Nyakatura G."/>
            <person name="O'dell C.N."/>
            <person name="Okwuonu G."/>
            <person name="Palmer S."/>
            <person name="Pandian R."/>
            <person name="Parker D."/>
            <person name="Parrish J."/>
            <person name="Pasternak S."/>
            <person name="Patel D."/>
            <person name="Pearce A.V."/>
            <person name="Pearson D.M."/>
            <person name="Pelan S.E."/>
            <person name="Perez L."/>
            <person name="Porter K.M."/>
            <person name="Ramsey Y."/>
            <person name="Reichwald K."/>
            <person name="Rhodes S."/>
            <person name="Ridler K.A."/>
            <person name="Schlessinger D."/>
            <person name="Schueler M.G."/>
            <person name="Sehra H.K."/>
            <person name="Shaw-Smith C."/>
            <person name="Shen H."/>
            <person name="Sheridan E.M."/>
            <person name="Shownkeen R."/>
            <person name="Skuce C.D."/>
            <person name="Smith M.L."/>
            <person name="Sotheran E.C."/>
            <person name="Steingruber H.E."/>
            <person name="Steward C.A."/>
            <person name="Storey R."/>
            <person name="Swann R.M."/>
            <person name="Swarbreck D."/>
            <person name="Tabor P.E."/>
            <person name="Taudien S."/>
            <person name="Taylor T."/>
            <person name="Teague B."/>
            <person name="Thomas K."/>
            <person name="Thorpe A."/>
            <person name="Timms K."/>
            <person name="Tracey A."/>
            <person name="Trevanion S."/>
            <person name="Tromans A.C."/>
            <person name="d'Urso M."/>
            <person name="Verduzco D."/>
            <person name="Villasana D."/>
            <person name="Waldron L."/>
            <person name="Wall M."/>
            <person name="Wang Q."/>
            <person name="Warren J."/>
            <person name="Warry G.L."/>
            <person name="Wei X."/>
            <person name="West A."/>
            <person name="Whitehead S.L."/>
            <person name="Whiteley M.N."/>
            <person name="Wilkinson J.E."/>
            <person name="Willey D.L."/>
            <person name="Williams G."/>
            <person name="Williams L."/>
            <person name="Williamson A."/>
            <person name="Williamson H."/>
            <person name="Wilming L."/>
            <person name="Woodmansey R.L."/>
            <person name="Wray P.W."/>
            <person name="Yen J."/>
            <person name="Zhang J."/>
            <person name="Zhou J."/>
            <person name="Zoghbi H."/>
            <person name="Zorilla S."/>
            <person name="Buck D."/>
            <person name="Reinhardt R."/>
            <person name="Poustka A."/>
            <person name="Rosenthal A."/>
            <person name="Lehrach H."/>
            <person name="Meindl A."/>
            <person name="Minx P.J."/>
            <person name="Hillier L.W."/>
            <person name="Willard H.F."/>
            <person name="Wilson R.K."/>
            <person name="Waterston R.H."/>
            <person name="Rice C.M."/>
            <person name="Vaudin M."/>
            <person name="Coulson A."/>
            <person name="Nelson D.L."/>
            <person name="Weinstock G."/>
            <person name="Sulston J.E."/>
            <person name="Durbin R.M."/>
            <person name="Hubbard T."/>
            <person name="Gibbs R.A."/>
            <person name="Beck S."/>
            <person name="Rogers J."/>
            <person name="Bentley D.R."/>
        </authorList>
    </citation>
    <scope>NUCLEOTIDE SEQUENCE [LARGE SCALE GENOMIC DNA]</scope>
</reference>
<reference key="4">
    <citation type="journal article" date="2004" name="Genome Res.">
        <title>The status, quality, and expansion of the NIH full-length cDNA project: the Mammalian Gene Collection (MGC).</title>
        <authorList>
            <consortium name="The MGC Project Team"/>
        </authorList>
    </citation>
    <scope>NUCLEOTIDE SEQUENCE [LARGE SCALE MRNA]</scope>
    <source>
        <tissue>Placenta</tissue>
    </source>
</reference>
<proteinExistence type="evidence at protein level"/>
<gene>
    <name type="primary">XAGE3</name>
    <name type="synonym">GAGED4</name>
    <name type="synonym">PLAC6</name>
    <name type="ORF">PP9012</name>
</gene>
<protein>
    <recommendedName>
        <fullName>X antigen family member 3</fullName>
        <shortName>XAGE-3</shortName>
    </recommendedName>
    <alternativeName>
        <fullName>Cancer/testis antigen 12.3</fullName>
        <shortName>CT12.3</shortName>
    </alternativeName>
    <alternativeName>
        <fullName>G antigen family D member 4</fullName>
    </alternativeName>
    <alternativeName>
        <fullName>Placenta-specific gene 6 protein</fullName>
    </alternativeName>
</protein>
<feature type="chain" id="PRO_0000148351" description="X antigen family member 3">
    <location>
        <begin position="1"/>
        <end position="111"/>
    </location>
</feature>
<feature type="region of interest" description="Disordered" evidence="1">
    <location>
        <begin position="1"/>
        <end position="111"/>
    </location>
</feature>
<feature type="compositionally biased region" description="Acidic residues" evidence="1">
    <location>
        <begin position="29"/>
        <end position="40"/>
    </location>
</feature>
<feature type="compositionally biased region" description="Basic and acidic residues" evidence="1">
    <location>
        <begin position="97"/>
        <end position="111"/>
    </location>
</feature>
<feature type="sequence conflict" description="In Ref. 2; AAL55879." evidence="2" ref="2">
    <original>P</original>
    <variation>H</variation>
    <location>
        <position position="11"/>
    </location>
</feature>
<sequence length="111" mass="12302">MIWRGRSTYRPRPRRSVPPPELIGPMLEPGDEEPQQEEPPTESRDPAPGQEREEDQGAAETQVPDLEADLQELSQSKTGGECGNGPDDQGKILPKSEQFKMPEGGDRQPQV</sequence>
<comment type="interaction">
    <interactant intactId="EBI-6448284">
        <id>Q8WTP9</id>
    </interactant>
    <interactant intactId="EBI-349854">
        <id>P13569</id>
        <label>CFTR</label>
    </interactant>
    <organismsDiffer>false</organismsDiffer>
    <experiments>4</experiments>
</comment>
<comment type="interaction">
    <interactant intactId="EBI-6448284">
        <id>Q8WTP9</id>
    </interactant>
    <interactant intactId="EBI-10172181">
        <id>Q53SE7</id>
        <label>FLJ13057</label>
    </interactant>
    <organismsDiffer>false</organismsDiffer>
    <experiments>3</experiments>
</comment>
<comment type="interaction">
    <interactant intactId="EBI-6448284">
        <id>Q8WTP9</id>
    </interactant>
    <interactant intactId="EBI-2548508">
        <id>Q96IK5</id>
        <label>GMCL1</label>
    </interactant>
    <organismsDiffer>false</organismsDiffer>
    <experiments>7</experiments>
</comment>
<comment type="interaction">
    <interactant intactId="EBI-6448284">
        <id>Q8WTP9</id>
    </interactant>
    <interactant intactId="EBI-466029">
        <id>P42858</id>
        <label>HTT</label>
    </interactant>
    <organismsDiffer>false</organismsDiffer>
    <experiments>3</experiments>
</comment>
<comment type="interaction">
    <interactant intactId="EBI-6448284">
        <id>Q8WTP9</id>
    </interactant>
    <interactant intactId="EBI-11973993">
        <id>Q5TA81</id>
        <label>LCE2C</label>
    </interactant>
    <organismsDiffer>false</organismsDiffer>
    <experiments>3</experiments>
</comment>
<comment type="similarity">
    <text evidence="2">Belongs to the GAGE family.</text>
</comment>
<organism>
    <name type="scientific">Homo sapiens</name>
    <name type="common">Human</name>
    <dbReference type="NCBI Taxonomy" id="9606"/>
    <lineage>
        <taxon>Eukaryota</taxon>
        <taxon>Metazoa</taxon>
        <taxon>Chordata</taxon>
        <taxon>Craniata</taxon>
        <taxon>Vertebrata</taxon>
        <taxon>Euteleostomi</taxon>
        <taxon>Mammalia</taxon>
        <taxon>Eutheria</taxon>
        <taxon>Euarchontoglires</taxon>
        <taxon>Primates</taxon>
        <taxon>Haplorrhini</taxon>
        <taxon>Catarrhini</taxon>
        <taxon>Hominidae</taxon>
        <taxon>Homo</taxon>
    </lineage>
</organism>